<dbReference type="EC" id="7.1.1.2" evidence="1"/>
<dbReference type="EMBL" id="AY882063">
    <property type="protein sequence ID" value="AAX76798.1"/>
    <property type="molecule type" value="Genomic_DNA"/>
</dbReference>
<dbReference type="RefSeq" id="YP_008992405.1">
    <property type="nucleotide sequence ID" value="NC_023210.1"/>
</dbReference>
<dbReference type="SMR" id="Q2TGY1"/>
<dbReference type="GeneID" id="18126579"/>
<dbReference type="CTD" id="4536"/>
<dbReference type="GO" id="GO:0005743">
    <property type="term" value="C:mitochondrial inner membrane"/>
    <property type="evidence" value="ECO:0000250"/>
    <property type="project" value="UniProtKB"/>
</dbReference>
<dbReference type="GO" id="GO:0008137">
    <property type="term" value="F:NADH dehydrogenase (ubiquinone) activity"/>
    <property type="evidence" value="ECO:0000250"/>
    <property type="project" value="UniProtKB"/>
</dbReference>
<dbReference type="GO" id="GO:0006120">
    <property type="term" value="P:mitochondrial electron transport, NADH to ubiquinone"/>
    <property type="evidence" value="ECO:0000250"/>
    <property type="project" value="UniProtKB"/>
</dbReference>
<dbReference type="GO" id="GO:0032981">
    <property type="term" value="P:mitochondrial respiratory chain complex I assembly"/>
    <property type="evidence" value="ECO:0000250"/>
    <property type="project" value="UniProtKB"/>
</dbReference>
<dbReference type="InterPro" id="IPR050175">
    <property type="entry name" value="Complex_I_Subunit_2"/>
</dbReference>
<dbReference type="InterPro" id="IPR010933">
    <property type="entry name" value="NADH_DH_su2_C"/>
</dbReference>
<dbReference type="InterPro" id="IPR003917">
    <property type="entry name" value="NADH_UbQ_OxRdtase_chain2"/>
</dbReference>
<dbReference type="InterPro" id="IPR001750">
    <property type="entry name" value="ND/Mrp_TM"/>
</dbReference>
<dbReference type="PANTHER" id="PTHR46552">
    <property type="entry name" value="NADH-UBIQUINONE OXIDOREDUCTASE CHAIN 2"/>
    <property type="match status" value="1"/>
</dbReference>
<dbReference type="PANTHER" id="PTHR46552:SF1">
    <property type="entry name" value="NADH-UBIQUINONE OXIDOREDUCTASE CHAIN 2"/>
    <property type="match status" value="1"/>
</dbReference>
<dbReference type="Pfam" id="PF06444">
    <property type="entry name" value="NADH_dehy_S2_C"/>
    <property type="match status" value="1"/>
</dbReference>
<dbReference type="Pfam" id="PF00361">
    <property type="entry name" value="Proton_antipo_M"/>
    <property type="match status" value="1"/>
</dbReference>
<dbReference type="PRINTS" id="PR01436">
    <property type="entry name" value="NADHDHGNASE2"/>
</dbReference>
<feature type="chain" id="PRO_0000226706" description="NADH-ubiquinone oxidoreductase chain 2">
    <location>
        <begin position="1"/>
        <end position="347"/>
    </location>
</feature>
<feature type="transmembrane region" description="Helical" evidence="3">
    <location>
        <begin position="3"/>
        <end position="23"/>
    </location>
</feature>
<feature type="transmembrane region" description="Helical" evidence="3">
    <location>
        <begin position="25"/>
        <end position="45"/>
    </location>
</feature>
<feature type="transmembrane region" description="Helical" evidence="3">
    <location>
        <begin position="67"/>
        <end position="87"/>
    </location>
</feature>
<feature type="transmembrane region" description="Helical" evidence="3">
    <location>
        <begin position="150"/>
        <end position="170"/>
    </location>
</feature>
<feature type="transmembrane region" description="Helical" evidence="3">
    <location>
        <begin position="178"/>
        <end position="198"/>
    </location>
</feature>
<feature type="transmembrane region" description="Helical" evidence="3">
    <location>
        <begin position="201"/>
        <end position="221"/>
    </location>
</feature>
<feature type="transmembrane region" description="Helical" evidence="3">
    <location>
        <begin position="237"/>
        <end position="257"/>
    </location>
</feature>
<feature type="transmembrane region" description="Helical" evidence="3">
    <location>
        <begin position="274"/>
        <end position="294"/>
    </location>
</feature>
<feature type="transmembrane region" description="Helical" evidence="3">
    <location>
        <begin position="323"/>
        <end position="343"/>
    </location>
</feature>
<evidence type="ECO:0000250" key="1">
    <source>
        <dbReference type="UniProtKB" id="P03891"/>
    </source>
</evidence>
<evidence type="ECO:0000250" key="2">
    <source>
        <dbReference type="UniProtKB" id="P03892"/>
    </source>
</evidence>
<evidence type="ECO:0000255" key="3"/>
<evidence type="ECO:0000305" key="4"/>
<reference key="1">
    <citation type="journal article" date="2006" name="Genetica">
        <title>Phylogeny of the caniform carnivora: evidence from multiple genes.</title>
        <authorList>
            <person name="Yu L."/>
            <person name="Zhang Y.P."/>
        </authorList>
    </citation>
    <scope>NUCLEOTIDE SEQUENCE [GENOMIC DNA]</scope>
</reference>
<geneLocation type="mitochondrion"/>
<proteinExistence type="inferred from homology"/>
<gene>
    <name evidence="1" type="primary">MT-ND2</name>
    <name type="synonym">MTND2</name>
    <name type="synonym">NADH2</name>
    <name type="synonym">ND2</name>
</gene>
<organism>
    <name type="scientific">Mustela kathiah</name>
    <name type="common">Yellow-bellied weasel</name>
    <dbReference type="NCBI Taxonomy" id="272460"/>
    <lineage>
        <taxon>Eukaryota</taxon>
        <taxon>Metazoa</taxon>
        <taxon>Chordata</taxon>
        <taxon>Craniata</taxon>
        <taxon>Vertebrata</taxon>
        <taxon>Euteleostomi</taxon>
        <taxon>Mammalia</taxon>
        <taxon>Eutheria</taxon>
        <taxon>Laurasiatheria</taxon>
        <taxon>Carnivora</taxon>
        <taxon>Caniformia</taxon>
        <taxon>Musteloidea</taxon>
        <taxon>Mustelidae</taxon>
        <taxon>Mustelinae</taxon>
        <taxon>Mustela</taxon>
    </lineage>
</organism>
<name>NU2M_MUSKA</name>
<protein>
    <recommendedName>
        <fullName evidence="1">NADH-ubiquinone oxidoreductase chain 2</fullName>
        <ecNumber evidence="1">7.1.1.2</ecNumber>
    </recommendedName>
    <alternativeName>
        <fullName>NADH dehydrogenase subunit 2</fullName>
    </alternativeName>
</protein>
<sequence>MKPPILIIIMFTVISGTIMVLMSSHWLMIWIGFEMNMLAIIPILMKKYNPRAVEAATKYFLTQATASMLLMLGIIMNLLLTGQWAVLSTLNPIVSNTMTVALAMKLGLSPFHFWVPEVTQGIPLLSGMVLLTWQKIAPLSILYQMAPSMNPHLLMTMALMSVLVGGWGGLNQTQLRKILAYSSIAHMGWMIAVMTYSPTLMLLNLSIYITMTLGTFMLFMFNSSTTTLSLSLTWNKLPLITSLILIIMLSLGGLPPLSGFIPKWMIIHELTKNNMIITTMLMTITALLNLYFYMRLTYATALTMFPSTNNMKMKWQFESTKNMTMLPPLIVISTMLLPLTPMMSTLF</sequence>
<comment type="function">
    <text evidence="1">Core subunit of the mitochondrial membrane respiratory chain NADH dehydrogenase (Complex I) which catalyzes electron transfer from NADH through the respiratory chain, using ubiquinone as an electron acceptor. Essential for the catalytic activity and assembly of complex I.</text>
</comment>
<comment type="catalytic activity">
    <reaction evidence="1">
        <text>a ubiquinone + NADH + 5 H(+)(in) = a ubiquinol + NAD(+) + 4 H(+)(out)</text>
        <dbReference type="Rhea" id="RHEA:29091"/>
        <dbReference type="Rhea" id="RHEA-COMP:9565"/>
        <dbReference type="Rhea" id="RHEA-COMP:9566"/>
        <dbReference type="ChEBI" id="CHEBI:15378"/>
        <dbReference type="ChEBI" id="CHEBI:16389"/>
        <dbReference type="ChEBI" id="CHEBI:17976"/>
        <dbReference type="ChEBI" id="CHEBI:57540"/>
        <dbReference type="ChEBI" id="CHEBI:57945"/>
        <dbReference type="EC" id="7.1.1.2"/>
    </reaction>
</comment>
<comment type="subunit">
    <text evidence="1 2">Core subunit of respiratory chain NADH dehydrogenase (Complex I) which is composed of 45 different subunits. Interacts with TMEM242 (By similarity).</text>
</comment>
<comment type="subcellular location">
    <subcellularLocation>
        <location evidence="2">Mitochondrion inner membrane</location>
        <topology evidence="3">Multi-pass membrane protein</topology>
    </subcellularLocation>
</comment>
<comment type="similarity">
    <text evidence="4">Belongs to the complex I subunit 2 family.</text>
</comment>
<keyword id="KW-0249">Electron transport</keyword>
<keyword id="KW-0472">Membrane</keyword>
<keyword id="KW-0496">Mitochondrion</keyword>
<keyword id="KW-0999">Mitochondrion inner membrane</keyword>
<keyword id="KW-0520">NAD</keyword>
<keyword id="KW-0679">Respiratory chain</keyword>
<keyword id="KW-1278">Translocase</keyword>
<keyword id="KW-0812">Transmembrane</keyword>
<keyword id="KW-1133">Transmembrane helix</keyword>
<keyword id="KW-0813">Transport</keyword>
<keyword id="KW-0830">Ubiquinone</keyword>
<accession>Q2TGY1</accession>